<feature type="chain" id="PRO_0000279796" description="Probable potassium transport system protein Kup 1">
    <location>
        <begin position="1"/>
        <end position="673"/>
    </location>
</feature>
<feature type="transmembrane region" description="Helical" evidence="1">
    <location>
        <begin position="14"/>
        <end position="34"/>
    </location>
</feature>
<feature type="transmembrane region" description="Helical" evidence="1">
    <location>
        <begin position="58"/>
        <end position="78"/>
    </location>
</feature>
<feature type="transmembrane region" description="Helical" evidence="1">
    <location>
        <begin position="101"/>
        <end position="121"/>
    </location>
</feature>
<feature type="transmembrane region" description="Helical" evidence="1">
    <location>
        <begin position="147"/>
        <end position="167"/>
    </location>
</feature>
<feature type="transmembrane region" description="Helical" evidence="1">
    <location>
        <begin position="175"/>
        <end position="195"/>
    </location>
</feature>
<feature type="transmembrane region" description="Helical" evidence="1">
    <location>
        <begin position="196"/>
        <end position="216"/>
    </location>
</feature>
<feature type="transmembrane region" description="Helical" evidence="1">
    <location>
        <begin position="220"/>
        <end position="240"/>
    </location>
</feature>
<feature type="transmembrane region" description="Helical" evidence="1">
    <location>
        <begin position="252"/>
        <end position="272"/>
    </location>
</feature>
<feature type="transmembrane region" description="Helical" evidence="1">
    <location>
        <begin position="294"/>
        <end position="314"/>
    </location>
</feature>
<feature type="transmembrane region" description="Helical" evidence="1">
    <location>
        <begin position="345"/>
        <end position="365"/>
    </location>
</feature>
<feature type="transmembrane region" description="Helical" evidence="1">
    <location>
        <begin position="374"/>
        <end position="394"/>
    </location>
</feature>
<feature type="transmembrane region" description="Helical" evidence="1">
    <location>
        <begin position="403"/>
        <end position="423"/>
    </location>
</feature>
<feature type="transmembrane region" description="Helical" evidence="1">
    <location>
        <begin position="427"/>
        <end position="447"/>
    </location>
</feature>
<keyword id="KW-1003">Cell membrane</keyword>
<keyword id="KW-0406">Ion transport</keyword>
<keyword id="KW-0472">Membrane</keyword>
<keyword id="KW-0630">Potassium</keyword>
<keyword id="KW-0633">Potassium transport</keyword>
<keyword id="KW-0769">Symport</keyword>
<keyword id="KW-0812">Transmembrane</keyword>
<keyword id="KW-1133">Transmembrane helix</keyword>
<keyword id="KW-0813">Transport</keyword>
<name>KUP1_LACLS</name>
<accession>Q031B2</accession>
<comment type="function">
    <text evidence="1">Transport of potassium into the cell. Likely operates as a K(+):H(+) symporter.</text>
</comment>
<comment type="catalytic activity">
    <reaction evidence="1">
        <text>K(+)(in) + H(+)(in) = K(+)(out) + H(+)(out)</text>
        <dbReference type="Rhea" id="RHEA:28490"/>
        <dbReference type="ChEBI" id="CHEBI:15378"/>
        <dbReference type="ChEBI" id="CHEBI:29103"/>
    </reaction>
    <physiologicalReaction direction="right-to-left" evidence="1">
        <dbReference type="Rhea" id="RHEA:28492"/>
    </physiologicalReaction>
</comment>
<comment type="subcellular location">
    <subcellularLocation>
        <location evidence="1">Cell membrane</location>
        <topology evidence="1">Multi-pass membrane protein</topology>
    </subcellularLocation>
</comment>
<comment type="similarity">
    <text evidence="1">Belongs to the HAK/KUP transporter (TC 2.A.72) family.</text>
</comment>
<protein>
    <recommendedName>
        <fullName evidence="1">Probable potassium transport system protein Kup 1</fullName>
    </recommendedName>
</protein>
<gene>
    <name evidence="1" type="primary">kup1</name>
    <name type="ordered locus">LACR_0643</name>
</gene>
<organism>
    <name type="scientific">Lactococcus lactis subsp. cremoris (strain SK11)</name>
    <dbReference type="NCBI Taxonomy" id="272622"/>
    <lineage>
        <taxon>Bacteria</taxon>
        <taxon>Bacillati</taxon>
        <taxon>Bacillota</taxon>
        <taxon>Bacilli</taxon>
        <taxon>Lactobacillales</taxon>
        <taxon>Streptococcaceae</taxon>
        <taxon>Lactococcus</taxon>
        <taxon>Lactococcus cremoris subsp. cremoris</taxon>
    </lineage>
</organism>
<sequence>MGYQHNRSFNKATGAGFIIAMGIVYGDIGTSPLYTMESIVQGQGGLERISETSIIGALSLIIWTLTLITTVKYVWIALKADNNHEGGIFSLFTLVRKYAKWLIIPAMIGGAALLSDGALTPAVTVTSAIEGLRSIPAFHEAFGQQQLPIVIITLAILAILFLIQRFGTSIVGKVFGPVMFIWFSFFGITGLINLFGDFSVLQAINPYWAIHLLLSPENKAGIFVLGSVFLATTGAEALYSDLGHVGRGNIHVSWPFVKVCIILSYCGQAAWLLQNRGKSLGDINPFFAVLPQSLIIFSVILATLAAIIASQALISGSFTLVSEAIRLKLLPRLRINYPGESFGQLYIPAVNLGLWLAASFIVVYFQSSAHMEAAYGLAITVTMLMTTILLTVYLAQHQKVKKVFVVLFFGAFIFIEGLFFAASAVKFLHGGYVVVILAALILFVMAIWHKSDQLFYKYLKSSNLNDYKEQMNKLRKDESYDLYHTNVVYLTAKMDKEWIDRSILYSILDKRPKKAEVYWFVKVNVTDEPYTSEYEVDMLGTDFIVCVNLYLGFHMRQEIPRYLRTIVTNLMESGRLPQQHQPYSIIPGRKVGDFRFILLEEKLINARQMPAFERFVLQTKEQIKKITASPARWFGLHFSEVTVETVPLVLSDVRNLEIHERISKENEVENLSK</sequence>
<proteinExistence type="inferred from homology"/>
<dbReference type="EMBL" id="CP000425">
    <property type="protein sequence ID" value="ABJ72210.1"/>
    <property type="molecule type" value="Genomic_DNA"/>
</dbReference>
<dbReference type="RefSeq" id="WP_011675762.1">
    <property type="nucleotide sequence ID" value="NC_008527.1"/>
</dbReference>
<dbReference type="KEGG" id="llc:LACR_0643"/>
<dbReference type="HOGENOM" id="CLU_008142_4_1_9"/>
<dbReference type="Proteomes" id="UP000000240">
    <property type="component" value="Chromosome"/>
</dbReference>
<dbReference type="GO" id="GO:0005886">
    <property type="term" value="C:plasma membrane"/>
    <property type="evidence" value="ECO:0007669"/>
    <property type="project" value="UniProtKB-SubCell"/>
</dbReference>
<dbReference type="GO" id="GO:0015079">
    <property type="term" value="F:potassium ion transmembrane transporter activity"/>
    <property type="evidence" value="ECO:0007669"/>
    <property type="project" value="UniProtKB-UniRule"/>
</dbReference>
<dbReference type="GO" id="GO:0015293">
    <property type="term" value="F:symporter activity"/>
    <property type="evidence" value="ECO:0007669"/>
    <property type="project" value="UniProtKB-UniRule"/>
</dbReference>
<dbReference type="HAMAP" id="MF_01522">
    <property type="entry name" value="Kup"/>
    <property type="match status" value="1"/>
</dbReference>
<dbReference type="InterPro" id="IPR003855">
    <property type="entry name" value="K+_transporter"/>
</dbReference>
<dbReference type="InterPro" id="IPR053952">
    <property type="entry name" value="K_trans_C"/>
</dbReference>
<dbReference type="InterPro" id="IPR053951">
    <property type="entry name" value="K_trans_N"/>
</dbReference>
<dbReference type="InterPro" id="IPR023051">
    <property type="entry name" value="Kup"/>
</dbReference>
<dbReference type="PANTHER" id="PTHR30540:SF83">
    <property type="entry name" value="K+ POTASSIUM TRANSPORTER"/>
    <property type="match status" value="1"/>
</dbReference>
<dbReference type="PANTHER" id="PTHR30540">
    <property type="entry name" value="OSMOTIC STRESS POTASSIUM TRANSPORTER"/>
    <property type="match status" value="1"/>
</dbReference>
<dbReference type="Pfam" id="PF02705">
    <property type="entry name" value="K_trans"/>
    <property type="match status" value="1"/>
</dbReference>
<dbReference type="Pfam" id="PF22776">
    <property type="entry name" value="K_trans_C"/>
    <property type="match status" value="1"/>
</dbReference>
<evidence type="ECO:0000255" key="1">
    <source>
        <dbReference type="HAMAP-Rule" id="MF_01522"/>
    </source>
</evidence>
<reference key="1">
    <citation type="journal article" date="2006" name="Proc. Natl. Acad. Sci. U.S.A.">
        <title>Comparative genomics of the lactic acid bacteria.</title>
        <authorList>
            <person name="Makarova K.S."/>
            <person name="Slesarev A."/>
            <person name="Wolf Y.I."/>
            <person name="Sorokin A."/>
            <person name="Mirkin B."/>
            <person name="Koonin E.V."/>
            <person name="Pavlov A."/>
            <person name="Pavlova N."/>
            <person name="Karamychev V."/>
            <person name="Polouchine N."/>
            <person name="Shakhova V."/>
            <person name="Grigoriev I."/>
            <person name="Lou Y."/>
            <person name="Rohksar D."/>
            <person name="Lucas S."/>
            <person name="Huang K."/>
            <person name="Goodstein D.M."/>
            <person name="Hawkins T."/>
            <person name="Plengvidhya V."/>
            <person name="Welker D."/>
            <person name="Hughes J."/>
            <person name="Goh Y."/>
            <person name="Benson A."/>
            <person name="Baldwin K."/>
            <person name="Lee J.-H."/>
            <person name="Diaz-Muniz I."/>
            <person name="Dosti B."/>
            <person name="Smeianov V."/>
            <person name="Wechter W."/>
            <person name="Barabote R."/>
            <person name="Lorca G."/>
            <person name="Altermann E."/>
            <person name="Barrangou R."/>
            <person name="Ganesan B."/>
            <person name="Xie Y."/>
            <person name="Rawsthorne H."/>
            <person name="Tamir D."/>
            <person name="Parker C."/>
            <person name="Breidt F."/>
            <person name="Broadbent J.R."/>
            <person name="Hutkins R."/>
            <person name="O'Sullivan D."/>
            <person name="Steele J."/>
            <person name="Unlu G."/>
            <person name="Saier M.H. Jr."/>
            <person name="Klaenhammer T."/>
            <person name="Richardson P."/>
            <person name="Kozyavkin S."/>
            <person name="Weimer B.C."/>
            <person name="Mills D.A."/>
        </authorList>
    </citation>
    <scope>NUCLEOTIDE SEQUENCE [LARGE SCALE GENOMIC DNA]</scope>
    <source>
        <strain>SK11</strain>
    </source>
</reference>